<dbReference type="EC" id="1.11.1.21" evidence="1"/>
<dbReference type="EMBL" id="CP000319">
    <property type="protein sequence ID" value="ABE60939.1"/>
    <property type="molecule type" value="Genomic_DNA"/>
</dbReference>
<dbReference type="RefSeq" id="WP_011508646.1">
    <property type="nucleotide sequence ID" value="NC_007964.1"/>
</dbReference>
<dbReference type="SMR" id="Q1QS58"/>
<dbReference type="STRING" id="323097.Nham_0037"/>
<dbReference type="PeroxiBase" id="3630">
    <property type="entry name" value="NhCP01_X14"/>
</dbReference>
<dbReference type="KEGG" id="nha:Nham_0037"/>
<dbReference type="eggNOG" id="COG0376">
    <property type="taxonomic scope" value="Bacteria"/>
</dbReference>
<dbReference type="HOGENOM" id="CLU_025424_2_0_5"/>
<dbReference type="OrthoDB" id="9759743at2"/>
<dbReference type="Proteomes" id="UP000001953">
    <property type="component" value="Chromosome"/>
</dbReference>
<dbReference type="GO" id="GO:0005829">
    <property type="term" value="C:cytosol"/>
    <property type="evidence" value="ECO:0007669"/>
    <property type="project" value="TreeGrafter"/>
</dbReference>
<dbReference type="GO" id="GO:0004096">
    <property type="term" value="F:catalase activity"/>
    <property type="evidence" value="ECO:0007669"/>
    <property type="project" value="UniProtKB-UniRule"/>
</dbReference>
<dbReference type="GO" id="GO:0020037">
    <property type="term" value="F:heme binding"/>
    <property type="evidence" value="ECO:0007669"/>
    <property type="project" value="InterPro"/>
</dbReference>
<dbReference type="GO" id="GO:0046872">
    <property type="term" value="F:metal ion binding"/>
    <property type="evidence" value="ECO:0007669"/>
    <property type="project" value="UniProtKB-KW"/>
</dbReference>
<dbReference type="GO" id="GO:0070301">
    <property type="term" value="P:cellular response to hydrogen peroxide"/>
    <property type="evidence" value="ECO:0007669"/>
    <property type="project" value="TreeGrafter"/>
</dbReference>
<dbReference type="GO" id="GO:0042744">
    <property type="term" value="P:hydrogen peroxide catabolic process"/>
    <property type="evidence" value="ECO:0007669"/>
    <property type="project" value="UniProtKB-KW"/>
</dbReference>
<dbReference type="CDD" id="cd00649">
    <property type="entry name" value="catalase_peroxidase_1"/>
    <property type="match status" value="1"/>
</dbReference>
<dbReference type="CDD" id="cd08200">
    <property type="entry name" value="catalase_peroxidase_2"/>
    <property type="match status" value="1"/>
</dbReference>
<dbReference type="FunFam" id="1.10.420.10:FF:000002">
    <property type="entry name" value="Catalase-peroxidase"/>
    <property type="match status" value="1"/>
</dbReference>
<dbReference type="FunFam" id="1.10.420.10:FF:000004">
    <property type="entry name" value="Catalase-peroxidase"/>
    <property type="match status" value="1"/>
</dbReference>
<dbReference type="FunFam" id="1.10.520.10:FF:000002">
    <property type="entry name" value="Catalase-peroxidase"/>
    <property type="match status" value="1"/>
</dbReference>
<dbReference type="Gene3D" id="1.10.520.10">
    <property type="match status" value="2"/>
</dbReference>
<dbReference type="Gene3D" id="1.10.420.10">
    <property type="entry name" value="Peroxidase, domain 2"/>
    <property type="match status" value="2"/>
</dbReference>
<dbReference type="HAMAP" id="MF_01961">
    <property type="entry name" value="Catal_peroxid"/>
    <property type="match status" value="1"/>
</dbReference>
<dbReference type="InterPro" id="IPR000763">
    <property type="entry name" value="Catalase_peroxidase"/>
</dbReference>
<dbReference type="InterPro" id="IPR002016">
    <property type="entry name" value="Haem_peroxidase"/>
</dbReference>
<dbReference type="InterPro" id="IPR010255">
    <property type="entry name" value="Haem_peroxidase_sf"/>
</dbReference>
<dbReference type="InterPro" id="IPR019794">
    <property type="entry name" value="Peroxidases_AS"/>
</dbReference>
<dbReference type="InterPro" id="IPR019793">
    <property type="entry name" value="Peroxidases_heam-ligand_BS"/>
</dbReference>
<dbReference type="NCBIfam" id="TIGR00198">
    <property type="entry name" value="cat_per_HPI"/>
    <property type="match status" value="1"/>
</dbReference>
<dbReference type="NCBIfam" id="NF011635">
    <property type="entry name" value="PRK15061.1"/>
    <property type="match status" value="1"/>
</dbReference>
<dbReference type="PANTHER" id="PTHR30555:SF0">
    <property type="entry name" value="CATALASE-PEROXIDASE"/>
    <property type="match status" value="1"/>
</dbReference>
<dbReference type="PANTHER" id="PTHR30555">
    <property type="entry name" value="HYDROPEROXIDASE I, BIFUNCTIONAL CATALASE-PEROXIDASE"/>
    <property type="match status" value="1"/>
</dbReference>
<dbReference type="Pfam" id="PF00141">
    <property type="entry name" value="peroxidase"/>
    <property type="match status" value="2"/>
</dbReference>
<dbReference type="PRINTS" id="PR00460">
    <property type="entry name" value="BPEROXIDASE"/>
</dbReference>
<dbReference type="PRINTS" id="PR00458">
    <property type="entry name" value="PEROXIDASE"/>
</dbReference>
<dbReference type="SUPFAM" id="SSF48113">
    <property type="entry name" value="Heme-dependent peroxidases"/>
    <property type="match status" value="2"/>
</dbReference>
<dbReference type="PROSITE" id="PS00435">
    <property type="entry name" value="PEROXIDASE_1"/>
    <property type="match status" value="1"/>
</dbReference>
<dbReference type="PROSITE" id="PS00436">
    <property type="entry name" value="PEROXIDASE_2"/>
    <property type="match status" value="1"/>
</dbReference>
<dbReference type="PROSITE" id="PS50873">
    <property type="entry name" value="PEROXIDASE_4"/>
    <property type="match status" value="1"/>
</dbReference>
<evidence type="ECO:0000255" key="1">
    <source>
        <dbReference type="HAMAP-Rule" id="MF_01961"/>
    </source>
</evidence>
<gene>
    <name evidence="1" type="primary">katG</name>
    <name type="ordered locus">Nham_0037</name>
</gene>
<sequence length="729" mass="80451">MDAKTNDKSAGKCPFTSGRSHRIRDWWPGQLDVQVLHHNSNLSDPMDEDFDYAREFESLDLNAVIKDLTALMTDSQDWWPADFGHYGGLMIRLAWHSAGTYRITDGRGGAGAGQQRFAPLNSWPDNVLLDRGRRLLWPIKQKYGRKISWADLLVLSGNVALESMGFKTFGFAGGRADVWEPEELYWGPEGTWLGDERYSGERQLAEPLAAVQMGLIYVNPEGPNGKPDPIAAATDIRETFFRMAMNDEETVALIAGGHTFGKTHGAGDASLVGPAPESAPIEDQGLGWNSKFGTGKGGDSIGSGLEVTWTQTPTTWDNNFFDTLFKYEWELTKSPAGAYQWQAKDAPAITPDAHDTSKKHVPTMLTTDLSLRFDPAYGKISKHFHENPDQFADAFARAWYKLTHRDMGPRERYLGPLVPKETLIWQDPIPAVDHALVDDKDIAELKAKVLASGLTVPQLVSTAWASASTFRGSDKRGGANGARIRLAPQKDWEVNQPAQLKTVLARLEAIQSEFNGAQTGGKKVSLADLIVLAGCFAVEKAANDVGIDLKVPFTPGRMDASQDQTDVDSFAPLEPRADGFRNYIGSRHQFMTPEEALVDRAQLLNLTGPEMTVLVGGLRVLGANAADSRHGVFTKQPGTLTNDFFANLLTMDTVWQPVAGQDDVYEGRDRKTNAVQWTGTRVDLIFGSHSQLRAFAEVYACTDAKEKFARDFVAAWTKVMNADRFDLHR</sequence>
<accession>Q1QS58</accession>
<keyword id="KW-0349">Heme</keyword>
<keyword id="KW-0376">Hydrogen peroxide</keyword>
<keyword id="KW-0408">Iron</keyword>
<keyword id="KW-0479">Metal-binding</keyword>
<keyword id="KW-0560">Oxidoreductase</keyword>
<keyword id="KW-0575">Peroxidase</keyword>
<keyword id="KW-1185">Reference proteome</keyword>
<proteinExistence type="inferred from homology"/>
<protein>
    <recommendedName>
        <fullName evidence="1">Catalase-peroxidase</fullName>
        <shortName evidence="1">CP</shortName>
        <ecNumber evidence="1">1.11.1.21</ecNumber>
    </recommendedName>
    <alternativeName>
        <fullName evidence="1">Peroxidase/catalase</fullName>
    </alternativeName>
</protein>
<comment type="function">
    <text evidence="1">Bifunctional enzyme with both catalase and broad-spectrum peroxidase activity.</text>
</comment>
<comment type="catalytic activity">
    <reaction evidence="1">
        <text>H2O2 + AH2 = A + 2 H2O</text>
        <dbReference type="Rhea" id="RHEA:30275"/>
        <dbReference type="ChEBI" id="CHEBI:13193"/>
        <dbReference type="ChEBI" id="CHEBI:15377"/>
        <dbReference type="ChEBI" id="CHEBI:16240"/>
        <dbReference type="ChEBI" id="CHEBI:17499"/>
        <dbReference type="EC" id="1.11.1.21"/>
    </reaction>
</comment>
<comment type="catalytic activity">
    <reaction evidence="1">
        <text>2 H2O2 = O2 + 2 H2O</text>
        <dbReference type="Rhea" id="RHEA:20309"/>
        <dbReference type="ChEBI" id="CHEBI:15377"/>
        <dbReference type="ChEBI" id="CHEBI:15379"/>
        <dbReference type="ChEBI" id="CHEBI:16240"/>
        <dbReference type="EC" id="1.11.1.21"/>
    </reaction>
</comment>
<comment type="cofactor">
    <cofactor evidence="1">
        <name>heme b</name>
        <dbReference type="ChEBI" id="CHEBI:60344"/>
    </cofactor>
    <text evidence="1">Binds 1 heme b (iron(II)-protoporphyrin IX) group per dimer.</text>
</comment>
<comment type="subunit">
    <text evidence="1">Homodimer or homotetramer.</text>
</comment>
<comment type="PTM">
    <text evidence="1">Formation of the three residue Trp-Tyr-Met cross-link is important for the catalase, but not the peroxidase activity of the enzyme.</text>
</comment>
<comment type="similarity">
    <text evidence="1">Belongs to the peroxidase family. Peroxidase/catalase subfamily.</text>
</comment>
<organism>
    <name type="scientific">Nitrobacter hamburgensis (strain DSM 10229 / NCIMB 13809 / X14)</name>
    <dbReference type="NCBI Taxonomy" id="323097"/>
    <lineage>
        <taxon>Bacteria</taxon>
        <taxon>Pseudomonadati</taxon>
        <taxon>Pseudomonadota</taxon>
        <taxon>Alphaproteobacteria</taxon>
        <taxon>Hyphomicrobiales</taxon>
        <taxon>Nitrobacteraceae</taxon>
        <taxon>Nitrobacter</taxon>
    </lineage>
</organism>
<reference key="1">
    <citation type="submission" date="2006-03" db="EMBL/GenBank/DDBJ databases">
        <title>Complete sequence of chromosome of Nitrobacter hamburgensis X14.</title>
        <authorList>
            <consortium name="US DOE Joint Genome Institute"/>
            <person name="Copeland A."/>
            <person name="Lucas S."/>
            <person name="Lapidus A."/>
            <person name="Barry K."/>
            <person name="Detter J.C."/>
            <person name="Glavina del Rio T."/>
            <person name="Hammon N."/>
            <person name="Israni S."/>
            <person name="Dalin E."/>
            <person name="Tice H."/>
            <person name="Pitluck S."/>
            <person name="Chain P."/>
            <person name="Malfatti S."/>
            <person name="Shin M."/>
            <person name="Vergez L."/>
            <person name="Schmutz J."/>
            <person name="Larimer F."/>
            <person name="Land M."/>
            <person name="Hauser L."/>
            <person name="Kyrpides N."/>
            <person name="Ivanova N."/>
            <person name="Ward B."/>
            <person name="Arp D."/>
            <person name="Klotz M."/>
            <person name="Stein L."/>
            <person name="O'Mullan G."/>
            <person name="Starkenburg S."/>
            <person name="Sayavedra L."/>
            <person name="Poret-Peterson A.T."/>
            <person name="Gentry M.E."/>
            <person name="Bruce D."/>
            <person name="Richardson P."/>
        </authorList>
    </citation>
    <scope>NUCLEOTIDE SEQUENCE [LARGE SCALE GENOMIC DNA]</scope>
    <source>
        <strain>DSM 10229 / NCIMB 13809 / X14</strain>
    </source>
</reference>
<name>KATG_NITHX</name>
<feature type="chain" id="PRO_0000354849" description="Catalase-peroxidase">
    <location>
        <begin position="1"/>
        <end position="729"/>
    </location>
</feature>
<feature type="active site" description="Proton acceptor" evidence="1">
    <location>
        <position position="96"/>
    </location>
</feature>
<feature type="binding site" description="axial binding residue" evidence="1">
    <location>
        <position position="258"/>
    </location>
    <ligand>
        <name>heme b</name>
        <dbReference type="ChEBI" id="CHEBI:60344"/>
    </ligand>
    <ligandPart>
        <name>Fe</name>
        <dbReference type="ChEBI" id="CHEBI:18248"/>
    </ligandPart>
</feature>
<feature type="site" description="Transition state stabilizer" evidence="1">
    <location>
        <position position="92"/>
    </location>
</feature>
<feature type="cross-link" description="Tryptophyl-tyrosyl-methioninium (Trp-Tyr) (with M-243)" evidence="1">
    <location>
        <begin position="95"/>
        <end position="217"/>
    </location>
</feature>
<feature type="cross-link" description="Tryptophyl-tyrosyl-methioninium (Tyr-Met) (with W-95)" evidence="1">
    <location>
        <begin position="217"/>
        <end position="243"/>
    </location>
</feature>